<comment type="function">
    <text evidence="2 4">Involved in the assembly of mitochondrial iron-sulfur proteins. Probably involved in the binding of an intermediate of Fe/S cluster assembly (By similarity). Required for maintenance of circadian rhythms under constant darkness (PubMed:22885802).</text>
</comment>
<comment type="subunit">
    <text evidence="5">Interacts with cry.</text>
</comment>
<comment type="subcellular location">
    <subcellularLocation>
        <location evidence="2">Mitochondrion</location>
    </subcellularLocation>
</comment>
<comment type="alternative products">
    <event type="alternative splicing"/>
    <isoform>
        <id>Q8T3X9-1</id>
        <name>1</name>
        <sequence type="displayed"/>
    </isoform>
    <isoform>
        <id>Q8T3X9-2</id>
        <name>2</name>
        <sequence type="described" ref="VSP_058044"/>
    </isoform>
</comment>
<comment type="tissue specificity">
    <text evidence="5">Detected in head.</text>
</comment>
<comment type="similarity">
    <text evidence="7">Belongs to the HesB/IscA family.</text>
</comment>
<feature type="transit peptide" description="Mitochondrion" evidence="3">
    <location>
        <begin position="1"/>
        <end position="24"/>
    </location>
</feature>
<feature type="chain" id="PRO_0000435362" description="Iron-sulfur cluster assembly 1 homolog, mitochondrial">
    <location>
        <begin position="25"/>
        <end position="130"/>
    </location>
</feature>
<feature type="binding site" evidence="1">
    <location>
        <position position="58"/>
    </location>
    <ligand>
        <name>Fe cation</name>
        <dbReference type="ChEBI" id="CHEBI:24875"/>
    </ligand>
</feature>
<feature type="binding site" evidence="1">
    <location>
        <position position="122"/>
    </location>
    <ligand>
        <name>Fe cation</name>
        <dbReference type="ChEBI" id="CHEBI:24875"/>
    </ligand>
</feature>
<feature type="binding site" evidence="1">
    <location>
        <position position="124"/>
    </location>
    <ligand>
        <name>Fe cation</name>
        <dbReference type="ChEBI" id="CHEBI:24875"/>
    </ligand>
</feature>
<feature type="splice variant" id="VSP_058044" description="In isoform 2.">
    <original>K</original>
    <variation>KA</variation>
    <location>
        <position position="71"/>
    </location>
</feature>
<proteinExistence type="evidence at protein level"/>
<accession>Q8T3X9</accession>
<accession>M9PJN7</accession>
<accession>Q9VXR0</accession>
<keyword id="KW-0025">Alternative splicing</keyword>
<keyword id="KW-0408">Iron</keyword>
<keyword id="KW-0411">Iron-sulfur</keyword>
<keyword id="KW-0479">Metal-binding</keyword>
<keyword id="KW-0496">Mitochondrion</keyword>
<keyword id="KW-1185">Reference proteome</keyword>
<keyword id="KW-0809">Transit peptide</keyword>
<sequence>MATRVVATATVRAVKGRKLIPTRAALTLTPAAVLRIKTLLQDKPDMVGLKVGVRQRGCNGLSYTLDYASQKDKLDEEVVQDGVKVFIDKKAQLSLLGTEMDFVESKLSSEFVFNNPNIKGTCGCGESFSM</sequence>
<gene>
    <name evidence="6 10" type="primary">MagR</name>
    <name evidence="7" type="synonym">Isca1</name>
    <name evidence="10" type="synonym">l(1)G0136</name>
    <name evidence="10" type="ORF">CG8198</name>
</gene>
<name>ISCA1_DROME</name>
<evidence type="ECO:0000250" key="1">
    <source>
        <dbReference type="UniProtKB" id="P0AAC8"/>
    </source>
</evidence>
<evidence type="ECO:0000250" key="2">
    <source>
        <dbReference type="UniProtKB" id="Q9BUE6"/>
    </source>
</evidence>
<evidence type="ECO:0000255" key="3"/>
<evidence type="ECO:0000269" key="4">
    <source>
    </source>
</evidence>
<evidence type="ECO:0000269" key="5">
    <source>
    </source>
</evidence>
<evidence type="ECO:0000303" key="6">
    <source>
    </source>
</evidence>
<evidence type="ECO:0000305" key="7"/>
<evidence type="ECO:0000312" key="8">
    <source>
        <dbReference type="EMBL" id="AAF48498.2"/>
    </source>
</evidence>
<evidence type="ECO:0000312" key="9">
    <source>
        <dbReference type="EMBL" id="AAL90184.1"/>
    </source>
</evidence>
<evidence type="ECO:0000312" key="10">
    <source>
        <dbReference type="FlyBase" id="FBgn0026666"/>
    </source>
</evidence>
<evidence type="ECO:0000312" key="11">
    <source>
        <dbReference type="Proteomes" id="UP000000803"/>
    </source>
</evidence>
<dbReference type="EMBL" id="AE003500">
    <property type="protein sequence ID" value="AAF48498.2"/>
    <property type="molecule type" value="Genomic_DNA"/>
</dbReference>
<dbReference type="EMBL" id="AE014298">
    <property type="protein sequence ID" value="AGB95421.1"/>
    <property type="molecule type" value="Genomic_DNA"/>
</dbReference>
<dbReference type="EMBL" id="AY089446">
    <property type="protein sequence ID" value="AAL90184.1"/>
    <property type="molecule type" value="mRNA"/>
</dbReference>
<dbReference type="RefSeq" id="NP_001259579.1">
    <molecule id="Q8T3X9-2"/>
    <property type="nucleotide sequence ID" value="NM_001272650.1"/>
</dbReference>
<dbReference type="RefSeq" id="NP_573062.1">
    <molecule id="Q8T3X9-1"/>
    <property type="nucleotide sequence ID" value="NM_132834.2"/>
</dbReference>
<dbReference type="SMR" id="Q8T3X9"/>
<dbReference type="FunCoup" id="Q8T3X9">
    <property type="interactions" value="1035"/>
</dbReference>
<dbReference type="IntAct" id="Q8T3X9">
    <property type="interactions" value="2"/>
</dbReference>
<dbReference type="STRING" id="7227.FBpp0304862"/>
<dbReference type="PaxDb" id="7227-FBpp0304862"/>
<dbReference type="DNASU" id="32513"/>
<dbReference type="EnsemblMetazoa" id="FBtr0074084">
    <molecule id="Q8T3X9-1"/>
    <property type="protein sequence ID" value="FBpp0073900"/>
    <property type="gene ID" value="FBgn0026666"/>
</dbReference>
<dbReference type="EnsemblMetazoa" id="FBtr0332613">
    <molecule id="Q8T3X9-2"/>
    <property type="protein sequence ID" value="FBpp0304862"/>
    <property type="gene ID" value="FBgn0026666"/>
</dbReference>
<dbReference type="GeneID" id="32513"/>
<dbReference type="KEGG" id="dme:Dmel_CG8198"/>
<dbReference type="UCSC" id="CG8198-RA">
    <molecule id="Q8T3X9-1"/>
    <property type="organism name" value="d. melanogaster"/>
</dbReference>
<dbReference type="AGR" id="FB:FBgn0026666"/>
<dbReference type="CTD" id="32513"/>
<dbReference type="FlyBase" id="FBgn0026666">
    <property type="gene designation" value="MagR"/>
</dbReference>
<dbReference type="VEuPathDB" id="VectorBase:FBgn0026666"/>
<dbReference type="eggNOG" id="KOG1120">
    <property type="taxonomic scope" value="Eukaryota"/>
</dbReference>
<dbReference type="GeneTree" id="ENSGT00490000043385"/>
<dbReference type="InParanoid" id="Q8T3X9"/>
<dbReference type="OMA" id="LYIYGMQ"/>
<dbReference type="OrthoDB" id="333486at2759"/>
<dbReference type="PhylomeDB" id="Q8T3X9"/>
<dbReference type="Reactome" id="R-DME-1362409">
    <property type="pathway name" value="Mitochondrial iron-sulfur cluster biogenesis"/>
</dbReference>
<dbReference type="BioGRID-ORCS" id="32513">
    <property type="hits" value="1 hit in 1 CRISPR screen"/>
</dbReference>
<dbReference type="GenomeRNAi" id="32513"/>
<dbReference type="PRO" id="PR:Q8T3X9"/>
<dbReference type="Proteomes" id="UP000000803">
    <property type="component" value="Chromosome X"/>
</dbReference>
<dbReference type="Bgee" id="FBgn0026666">
    <property type="expression patterns" value="Expressed in adult antennal lobe projection neuron adPN (Drosophila) in brain and 185 other cell types or tissues"/>
</dbReference>
<dbReference type="GO" id="GO:0005737">
    <property type="term" value="C:cytoplasm"/>
    <property type="evidence" value="ECO:0000318"/>
    <property type="project" value="GO_Central"/>
</dbReference>
<dbReference type="GO" id="GO:0120510">
    <property type="term" value="C:mitochondrial [4Fe-4S] assembly complex"/>
    <property type="evidence" value="ECO:0000250"/>
    <property type="project" value="FlyBase"/>
</dbReference>
<dbReference type="GO" id="GO:0005759">
    <property type="term" value="C:mitochondrial matrix"/>
    <property type="evidence" value="ECO:0000303"/>
    <property type="project" value="FlyBase"/>
</dbReference>
<dbReference type="GO" id="GO:0005739">
    <property type="term" value="C:mitochondrion"/>
    <property type="evidence" value="ECO:0000318"/>
    <property type="project" value="GO_Central"/>
</dbReference>
<dbReference type="GO" id="GO:0051537">
    <property type="term" value="F:2 iron, 2 sulfur cluster binding"/>
    <property type="evidence" value="ECO:0000318"/>
    <property type="project" value="GO_Central"/>
</dbReference>
<dbReference type="GO" id="GO:0046872">
    <property type="term" value="F:metal ion binding"/>
    <property type="evidence" value="ECO:0007669"/>
    <property type="project" value="UniProtKB-KW"/>
</dbReference>
<dbReference type="GO" id="GO:0044572">
    <property type="term" value="P:[4Fe-4S] cluster assembly"/>
    <property type="evidence" value="ECO:0000303"/>
    <property type="project" value="FlyBase"/>
</dbReference>
<dbReference type="GO" id="GO:0016226">
    <property type="term" value="P:iron-sulfur cluster assembly"/>
    <property type="evidence" value="ECO:0000318"/>
    <property type="project" value="GO_Central"/>
</dbReference>
<dbReference type="GO" id="GO:0071000">
    <property type="term" value="P:response to magnetism"/>
    <property type="evidence" value="ECO:0000314"/>
    <property type="project" value="FlyBase"/>
</dbReference>
<dbReference type="FunFam" id="2.60.300.12:FF:000001">
    <property type="entry name" value="Iron-binding protein IscA"/>
    <property type="match status" value="1"/>
</dbReference>
<dbReference type="Gene3D" id="2.60.300.12">
    <property type="entry name" value="HesB-like domain"/>
    <property type="match status" value="1"/>
</dbReference>
<dbReference type="InterPro" id="IPR050322">
    <property type="entry name" value="Fe-S_cluster_asmbl/transfer"/>
</dbReference>
<dbReference type="InterPro" id="IPR000361">
    <property type="entry name" value="FeS_biogenesis"/>
</dbReference>
<dbReference type="InterPro" id="IPR016092">
    <property type="entry name" value="FeS_cluster_insertion"/>
</dbReference>
<dbReference type="InterPro" id="IPR017870">
    <property type="entry name" value="FeS_cluster_insertion_CS"/>
</dbReference>
<dbReference type="InterPro" id="IPR035903">
    <property type="entry name" value="HesB-like_dom_sf"/>
</dbReference>
<dbReference type="NCBIfam" id="TIGR00049">
    <property type="entry name" value="iron-sulfur cluster assembly accessory protein"/>
    <property type="match status" value="1"/>
</dbReference>
<dbReference type="PANTHER" id="PTHR10072:SF41">
    <property type="entry name" value="IRON-SULFUR CLUSTER ASSEMBLY 1 HOMOLOG, MITOCHONDRIAL"/>
    <property type="match status" value="1"/>
</dbReference>
<dbReference type="PANTHER" id="PTHR10072">
    <property type="entry name" value="IRON-SULFUR CLUSTER ASSEMBLY PROTEIN"/>
    <property type="match status" value="1"/>
</dbReference>
<dbReference type="Pfam" id="PF01521">
    <property type="entry name" value="Fe-S_biosyn"/>
    <property type="match status" value="1"/>
</dbReference>
<dbReference type="SUPFAM" id="SSF89360">
    <property type="entry name" value="HesB-like domain"/>
    <property type="match status" value="1"/>
</dbReference>
<dbReference type="PROSITE" id="PS01152">
    <property type="entry name" value="HESB"/>
    <property type="match status" value="1"/>
</dbReference>
<protein>
    <recommendedName>
        <fullName>Iron-sulfur cluster assembly 1 homolog, mitochondrial</fullName>
    </recommendedName>
    <alternativeName>
        <fullName evidence="10">Lethal (1) G0136</fullName>
    </alternativeName>
    <alternativeName>
        <fullName evidence="6">Putative magnetoreceptor subunit MagR</fullName>
    </alternativeName>
</protein>
<organism evidence="9">
    <name type="scientific">Drosophila melanogaster</name>
    <name type="common">Fruit fly</name>
    <dbReference type="NCBI Taxonomy" id="7227"/>
    <lineage>
        <taxon>Eukaryota</taxon>
        <taxon>Metazoa</taxon>
        <taxon>Ecdysozoa</taxon>
        <taxon>Arthropoda</taxon>
        <taxon>Hexapoda</taxon>
        <taxon>Insecta</taxon>
        <taxon>Pterygota</taxon>
        <taxon>Neoptera</taxon>
        <taxon>Endopterygota</taxon>
        <taxon>Diptera</taxon>
        <taxon>Brachycera</taxon>
        <taxon>Muscomorpha</taxon>
        <taxon>Ephydroidea</taxon>
        <taxon>Drosophilidae</taxon>
        <taxon>Drosophila</taxon>
        <taxon>Sophophora</taxon>
    </lineage>
</organism>
<reference evidence="8 11" key="1">
    <citation type="journal article" date="2000" name="Science">
        <title>The genome sequence of Drosophila melanogaster.</title>
        <authorList>
            <person name="Adams M.D."/>
            <person name="Celniker S.E."/>
            <person name="Holt R.A."/>
            <person name="Evans C.A."/>
            <person name="Gocayne J.D."/>
            <person name="Amanatides P.G."/>
            <person name="Scherer S.E."/>
            <person name="Li P.W."/>
            <person name="Hoskins R.A."/>
            <person name="Galle R.F."/>
            <person name="George R.A."/>
            <person name="Lewis S.E."/>
            <person name="Richards S."/>
            <person name="Ashburner M."/>
            <person name="Henderson S.N."/>
            <person name="Sutton G.G."/>
            <person name="Wortman J.R."/>
            <person name="Yandell M.D."/>
            <person name="Zhang Q."/>
            <person name="Chen L.X."/>
            <person name="Brandon R.C."/>
            <person name="Rogers Y.-H.C."/>
            <person name="Blazej R.G."/>
            <person name="Champe M."/>
            <person name="Pfeiffer B.D."/>
            <person name="Wan K.H."/>
            <person name="Doyle C."/>
            <person name="Baxter E.G."/>
            <person name="Helt G."/>
            <person name="Nelson C.R."/>
            <person name="Miklos G.L.G."/>
            <person name="Abril J.F."/>
            <person name="Agbayani A."/>
            <person name="An H.-J."/>
            <person name="Andrews-Pfannkoch C."/>
            <person name="Baldwin D."/>
            <person name="Ballew R.M."/>
            <person name="Basu A."/>
            <person name="Baxendale J."/>
            <person name="Bayraktaroglu L."/>
            <person name="Beasley E.M."/>
            <person name="Beeson K.Y."/>
            <person name="Benos P.V."/>
            <person name="Berman B.P."/>
            <person name="Bhandari D."/>
            <person name="Bolshakov S."/>
            <person name="Borkova D."/>
            <person name="Botchan M.R."/>
            <person name="Bouck J."/>
            <person name="Brokstein P."/>
            <person name="Brottier P."/>
            <person name="Burtis K.C."/>
            <person name="Busam D.A."/>
            <person name="Butler H."/>
            <person name="Cadieu E."/>
            <person name="Center A."/>
            <person name="Chandra I."/>
            <person name="Cherry J.M."/>
            <person name="Cawley S."/>
            <person name="Dahlke C."/>
            <person name="Davenport L.B."/>
            <person name="Davies P."/>
            <person name="de Pablos B."/>
            <person name="Delcher A."/>
            <person name="Deng Z."/>
            <person name="Mays A.D."/>
            <person name="Dew I."/>
            <person name="Dietz S.M."/>
            <person name="Dodson K."/>
            <person name="Doup L.E."/>
            <person name="Downes M."/>
            <person name="Dugan-Rocha S."/>
            <person name="Dunkov B.C."/>
            <person name="Dunn P."/>
            <person name="Durbin K.J."/>
            <person name="Evangelista C.C."/>
            <person name="Ferraz C."/>
            <person name="Ferriera S."/>
            <person name="Fleischmann W."/>
            <person name="Fosler C."/>
            <person name="Gabrielian A.E."/>
            <person name="Garg N.S."/>
            <person name="Gelbart W.M."/>
            <person name="Glasser K."/>
            <person name="Glodek A."/>
            <person name="Gong F."/>
            <person name="Gorrell J.H."/>
            <person name="Gu Z."/>
            <person name="Guan P."/>
            <person name="Harris M."/>
            <person name="Harris N.L."/>
            <person name="Harvey D.A."/>
            <person name="Heiman T.J."/>
            <person name="Hernandez J.R."/>
            <person name="Houck J."/>
            <person name="Hostin D."/>
            <person name="Houston K.A."/>
            <person name="Howland T.J."/>
            <person name="Wei M.-H."/>
            <person name="Ibegwam C."/>
            <person name="Jalali M."/>
            <person name="Kalush F."/>
            <person name="Karpen G.H."/>
            <person name="Ke Z."/>
            <person name="Kennison J.A."/>
            <person name="Ketchum K.A."/>
            <person name="Kimmel B.E."/>
            <person name="Kodira C.D."/>
            <person name="Kraft C.L."/>
            <person name="Kravitz S."/>
            <person name="Kulp D."/>
            <person name="Lai Z."/>
            <person name="Lasko P."/>
            <person name="Lei Y."/>
            <person name="Levitsky A.A."/>
            <person name="Li J.H."/>
            <person name="Li Z."/>
            <person name="Liang Y."/>
            <person name="Lin X."/>
            <person name="Liu X."/>
            <person name="Mattei B."/>
            <person name="McIntosh T.C."/>
            <person name="McLeod M.P."/>
            <person name="McPherson D."/>
            <person name="Merkulov G."/>
            <person name="Milshina N.V."/>
            <person name="Mobarry C."/>
            <person name="Morris J."/>
            <person name="Moshrefi A."/>
            <person name="Mount S.M."/>
            <person name="Moy M."/>
            <person name="Murphy B."/>
            <person name="Murphy L."/>
            <person name="Muzny D.M."/>
            <person name="Nelson D.L."/>
            <person name="Nelson D.R."/>
            <person name="Nelson K.A."/>
            <person name="Nixon K."/>
            <person name="Nusskern D.R."/>
            <person name="Pacleb J.M."/>
            <person name="Palazzolo M."/>
            <person name="Pittman G.S."/>
            <person name="Pan S."/>
            <person name="Pollard J."/>
            <person name="Puri V."/>
            <person name="Reese M.G."/>
            <person name="Reinert K."/>
            <person name="Remington K."/>
            <person name="Saunders R.D.C."/>
            <person name="Scheeler F."/>
            <person name="Shen H."/>
            <person name="Shue B.C."/>
            <person name="Siden-Kiamos I."/>
            <person name="Simpson M."/>
            <person name="Skupski M.P."/>
            <person name="Smith T.J."/>
            <person name="Spier E."/>
            <person name="Spradling A.C."/>
            <person name="Stapleton M."/>
            <person name="Strong R."/>
            <person name="Sun E."/>
            <person name="Svirskas R."/>
            <person name="Tector C."/>
            <person name="Turner R."/>
            <person name="Venter E."/>
            <person name="Wang A.H."/>
            <person name="Wang X."/>
            <person name="Wang Z.-Y."/>
            <person name="Wassarman D.A."/>
            <person name="Weinstock G.M."/>
            <person name="Weissenbach J."/>
            <person name="Williams S.M."/>
            <person name="Woodage T."/>
            <person name="Worley K.C."/>
            <person name="Wu D."/>
            <person name="Yang S."/>
            <person name="Yao Q.A."/>
            <person name="Ye J."/>
            <person name="Yeh R.-F."/>
            <person name="Zaveri J.S."/>
            <person name="Zhan M."/>
            <person name="Zhang G."/>
            <person name="Zhao Q."/>
            <person name="Zheng L."/>
            <person name="Zheng X.H."/>
            <person name="Zhong F.N."/>
            <person name="Zhong W."/>
            <person name="Zhou X."/>
            <person name="Zhu S.C."/>
            <person name="Zhu X."/>
            <person name="Smith H.O."/>
            <person name="Gibbs R.A."/>
            <person name="Myers E.W."/>
            <person name="Rubin G.M."/>
            <person name="Venter J.C."/>
        </authorList>
    </citation>
    <scope>NUCLEOTIDE SEQUENCE [LARGE SCALE GENOMIC DNA]</scope>
    <source>
        <strain evidence="11">Berkeley</strain>
    </source>
</reference>
<reference evidence="8 11" key="2">
    <citation type="journal article" date="2002" name="Genome Biol.">
        <title>Annotation of the Drosophila melanogaster euchromatic genome: a systematic review.</title>
        <authorList>
            <person name="Misra S."/>
            <person name="Crosby M.A."/>
            <person name="Mungall C.J."/>
            <person name="Matthews B.B."/>
            <person name="Campbell K.S."/>
            <person name="Hradecky P."/>
            <person name="Huang Y."/>
            <person name="Kaminker J.S."/>
            <person name="Millburn G.H."/>
            <person name="Prochnik S.E."/>
            <person name="Smith C.D."/>
            <person name="Tupy J.L."/>
            <person name="Whitfield E.J."/>
            <person name="Bayraktaroglu L."/>
            <person name="Berman B.P."/>
            <person name="Bettencourt B.R."/>
            <person name="Celniker S.E."/>
            <person name="de Grey A.D.N.J."/>
            <person name="Drysdale R.A."/>
            <person name="Harris N.L."/>
            <person name="Richter J."/>
            <person name="Russo S."/>
            <person name="Schroeder A.J."/>
            <person name="Shu S.Q."/>
            <person name="Stapleton M."/>
            <person name="Yamada C."/>
            <person name="Ashburner M."/>
            <person name="Gelbart W.M."/>
            <person name="Rubin G.M."/>
            <person name="Lewis S.E."/>
        </authorList>
    </citation>
    <scope>GENOME REANNOTATION</scope>
    <source>
        <strain evidence="11">Berkeley</strain>
    </source>
</reference>
<reference key="3">
    <citation type="journal article" date="2002" name="Genome Biol.">
        <title>A Drosophila full-length cDNA resource.</title>
        <authorList>
            <person name="Stapleton M."/>
            <person name="Carlson J.W."/>
            <person name="Brokstein P."/>
            <person name="Yu C."/>
            <person name="Champe M."/>
            <person name="George R.A."/>
            <person name="Guarin H."/>
            <person name="Kronmiller B."/>
            <person name="Pacleb J.M."/>
            <person name="Park S."/>
            <person name="Wan K.H."/>
            <person name="Rubin G.M."/>
            <person name="Celniker S.E."/>
        </authorList>
    </citation>
    <scope>NUCLEOTIDE SEQUENCE [LARGE SCALE MRNA]</scope>
    <source>
        <strain>Berkeley</strain>
        <tissue>Testis</tissue>
    </source>
</reference>
<reference key="4">
    <citation type="journal article" date="2012" name="Metallomics">
        <title>Genes for iron metabolism influence circadian rhythms in Drosophila melanogaster.</title>
        <authorList>
            <person name="Mandilaras K."/>
            <person name="Missirlis F."/>
        </authorList>
    </citation>
    <scope>FUNCTION</scope>
</reference>
<reference key="5">
    <citation type="journal article" date="2016" name="Nat. Mater.">
        <title>A magnetic protein biocompass.</title>
        <authorList>
            <person name="Qin S."/>
            <person name="Yin H."/>
            <person name="Yang C."/>
            <person name="Dou Y."/>
            <person name="Liu Z."/>
            <person name="Zhang P."/>
            <person name="Yu H."/>
            <person name="Huang Y."/>
            <person name="Feng J."/>
            <person name="Hao J."/>
            <person name="Hao J."/>
            <person name="Deng L."/>
            <person name="Yan X."/>
            <person name="Dong X."/>
            <person name="Zhao Z."/>
            <person name="Jiang T."/>
            <person name="Wang H.W."/>
            <person name="Luo S.J."/>
            <person name="Xie C."/>
        </authorList>
    </citation>
    <scope>INTERACTION WITH CRY</scope>
    <scope>TISSUE SPECIFICITY</scope>
</reference>